<name>RHO4_EREGS</name>
<evidence type="ECO:0000250" key="1"/>
<evidence type="ECO:0000305" key="2"/>
<reference key="1">
    <citation type="journal article" date="2000" name="Gene">
        <title>PCR-based gene targeting in the filamentous fungus Ashbya gossypii.</title>
        <authorList>
            <person name="Wendland J."/>
            <person name="Ayad-Durieux Y."/>
            <person name="Knechtle P."/>
            <person name="Rebischung C."/>
            <person name="Philippsen P."/>
        </authorList>
    </citation>
    <scope>NUCLEOTIDE SEQUENCE [GENOMIC DNA]</scope>
</reference>
<reference key="2">
    <citation type="journal article" date="2004" name="Science">
        <title>The Ashbya gossypii genome as a tool for mapping the ancient Saccharomyces cerevisiae genome.</title>
        <authorList>
            <person name="Dietrich F.S."/>
            <person name="Voegeli S."/>
            <person name="Brachat S."/>
            <person name="Lerch A."/>
            <person name="Gates K."/>
            <person name="Steiner S."/>
            <person name="Mohr C."/>
            <person name="Poehlmann R."/>
            <person name="Luedi P."/>
            <person name="Choi S."/>
            <person name="Wing R.A."/>
            <person name="Flavier A."/>
            <person name="Gaffney T.D."/>
            <person name="Philippsen P."/>
        </authorList>
    </citation>
    <scope>NUCLEOTIDE SEQUENCE [LARGE SCALE GENOMIC DNA]</scope>
    <source>
        <strain>ATCC 10895 / CBS 109.51 / FGSC 9923 / NRRL Y-1056</strain>
    </source>
</reference>
<reference key="3">
    <citation type="journal article" date="2013" name="G3 (Bethesda)">
        <title>Genomes of Ashbya fungi isolated from insects reveal four mating-type loci, numerous translocations, lack of transposons, and distinct gene duplications.</title>
        <authorList>
            <person name="Dietrich F.S."/>
            <person name="Voegeli S."/>
            <person name="Kuo S."/>
            <person name="Philippsen P."/>
        </authorList>
    </citation>
    <scope>GENOME REANNOTATION</scope>
    <source>
        <strain>ATCC 10895 / CBS 109.51 / FGSC 9923 / NRRL Y-1056</strain>
    </source>
</reference>
<proteinExistence type="inferred from homology"/>
<protein>
    <recommendedName>
        <fullName>GTP-binding protein RHO4</fullName>
    </recommendedName>
</protein>
<sequence>MSAGPLQAAPKKNYGALIGAGPAVGGAAFNRTLSEVASYERSRRDHATPDYRIKIVVVGDGATGKTSLLMSYTQGQFPEDYVPTIFENYVTNIEGPRGKVIELALWDTAGQEEYSRLRPLSYGDVDIVMVCYAADNRTSLTNAEELWFPEVRHFCPHAPMMLVGLKSDLYSLDALDRLVDPTDAELVARKMGAFVHLQCSAKTRQCLEDVFNTAIHTALYDELRAPPQRGVKGMFKKKQQRDPQAQSYKRVRKHRCVVL</sequence>
<dbReference type="EMBL" id="AF195008">
    <property type="protein sequence ID" value="AAF44725.1"/>
    <property type="molecule type" value="Genomic_DNA"/>
</dbReference>
<dbReference type="EMBL" id="AE016816">
    <property type="protein sequence ID" value="AAS51483.1"/>
    <property type="molecule type" value="Genomic_DNA"/>
</dbReference>
<dbReference type="RefSeq" id="NP_983659.1">
    <property type="nucleotide sequence ID" value="NM_209012.1"/>
</dbReference>
<dbReference type="SMR" id="Q9P8V0"/>
<dbReference type="FunCoup" id="Q9P8V0">
    <property type="interactions" value="155"/>
</dbReference>
<dbReference type="STRING" id="284811.Q9P8V0"/>
<dbReference type="EnsemblFungi" id="AAS51483">
    <property type="protein sequence ID" value="AAS51483"/>
    <property type="gene ID" value="AGOS_ACR257C"/>
</dbReference>
<dbReference type="GeneID" id="4619794"/>
<dbReference type="KEGG" id="ago:AGOS_ACR257C"/>
<dbReference type="eggNOG" id="KOG0393">
    <property type="taxonomic scope" value="Eukaryota"/>
</dbReference>
<dbReference type="HOGENOM" id="CLU_041217_21_1_1"/>
<dbReference type="InParanoid" id="Q9P8V0"/>
<dbReference type="OMA" id="GAFAHIQ"/>
<dbReference type="OrthoDB" id="4031310at2759"/>
<dbReference type="Proteomes" id="UP000000591">
    <property type="component" value="Chromosome III"/>
</dbReference>
<dbReference type="GO" id="GO:0005935">
    <property type="term" value="C:cellular bud neck"/>
    <property type="evidence" value="ECO:0007669"/>
    <property type="project" value="EnsemblFungi"/>
</dbReference>
<dbReference type="GO" id="GO:0005829">
    <property type="term" value="C:cytosol"/>
    <property type="evidence" value="ECO:0000318"/>
    <property type="project" value="GO_Central"/>
</dbReference>
<dbReference type="GO" id="GO:0000131">
    <property type="term" value="C:incipient cellular bud site"/>
    <property type="evidence" value="ECO:0007669"/>
    <property type="project" value="EnsemblFungi"/>
</dbReference>
<dbReference type="GO" id="GO:0005886">
    <property type="term" value="C:plasma membrane"/>
    <property type="evidence" value="ECO:0000318"/>
    <property type="project" value="GO_Central"/>
</dbReference>
<dbReference type="GO" id="GO:0005525">
    <property type="term" value="F:GTP binding"/>
    <property type="evidence" value="ECO:0000318"/>
    <property type="project" value="GO_Central"/>
</dbReference>
<dbReference type="GO" id="GO:0003924">
    <property type="term" value="F:GTPase activity"/>
    <property type="evidence" value="ECO:0000318"/>
    <property type="project" value="GO_Central"/>
</dbReference>
<dbReference type="GO" id="GO:0019901">
    <property type="term" value="F:protein kinase binding"/>
    <property type="evidence" value="ECO:0000318"/>
    <property type="project" value="GO_Central"/>
</dbReference>
<dbReference type="GO" id="GO:0007015">
    <property type="term" value="P:actin filament organization"/>
    <property type="evidence" value="ECO:0000318"/>
    <property type="project" value="GO_Central"/>
</dbReference>
<dbReference type="GO" id="GO:0030011">
    <property type="term" value="P:maintenance of cell polarity"/>
    <property type="evidence" value="ECO:0007669"/>
    <property type="project" value="EnsemblFungi"/>
</dbReference>
<dbReference type="GO" id="GO:0090338">
    <property type="term" value="P:positive regulation of formin-nucleated actin cable assembly"/>
    <property type="evidence" value="ECO:0007669"/>
    <property type="project" value="EnsemblFungi"/>
</dbReference>
<dbReference type="GO" id="GO:0032956">
    <property type="term" value="P:regulation of actin cytoskeleton organization"/>
    <property type="evidence" value="ECO:0000318"/>
    <property type="project" value="GO_Central"/>
</dbReference>
<dbReference type="GO" id="GO:0007165">
    <property type="term" value="P:signal transduction"/>
    <property type="evidence" value="ECO:0000318"/>
    <property type="project" value="GO_Central"/>
</dbReference>
<dbReference type="GO" id="GO:0007264">
    <property type="term" value="P:small GTPase-mediated signal transduction"/>
    <property type="evidence" value="ECO:0007669"/>
    <property type="project" value="InterPro"/>
</dbReference>
<dbReference type="FunFam" id="3.40.50.300:FF:000983">
    <property type="entry name" value="Rho family GTPase"/>
    <property type="match status" value="1"/>
</dbReference>
<dbReference type="Gene3D" id="3.40.50.300">
    <property type="entry name" value="P-loop containing nucleotide triphosphate hydrolases"/>
    <property type="match status" value="1"/>
</dbReference>
<dbReference type="InterPro" id="IPR027417">
    <property type="entry name" value="P-loop_NTPase"/>
</dbReference>
<dbReference type="InterPro" id="IPR005225">
    <property type="entry name" value="Small_GTP-bd"/>
</dbReference>
<dbReference type="InterPro" id="IPR001806">
    <property type="entry name" value="Small_GTPase"/>
</dbReference>
<dbReference type="InterPro" id="IPR003578">
    <property type="entry name" value="Small_GTPase_Rho"/>
</dbReference>
<dbReference type="NCBIfam" id="TIGR00231">
    <property type="entry name" value="small_GTP"/>
    <property type="match status" value="1"/>
</dbReference>
<dbReference type="PANTHER" id="PTHR24072">
    <property type="entry name" value="RHO FAMILY GTPASE"/>
    <property type="match status" value="1"/>
</dbReference>
<dbReference type="Pfam" id="PF00071">
    <property type="entry name" value="Ras"/>
    <property type="match status" value="1"/>
</dbReference>
<dbReference type="PRINTS" id="PR00449">
    <property type="entry name" value="RASTRNSFRMNG"/>
</dbReference>
<dbReference type="SMART" id="SM00175">
    <property type="entry name" value="RAB"/>
    <property type="match status" value="1"/>
</dbReference>
<dbReference type="SMART" id="SM00176">
    <property type="entry name" value="RAN"/>
    <property type="match status" value="1"/>
</dbReference>
<dbReference type="SMART" id="SM00173">
    <property type="entry name" value="RAS"/>
    <property type="match status" value="1"/>
</dbReference>
<dbReference type="SMART" id="SM00174">
    <property type="entry name" value="RHO"/>
    <property type="match status" value="1"/>
</dbReference>
<dbReference type="SUPFAM" id="SSF52540">
    <property type="entry name" value="P-loop containing nucleoside triphosphate hydrolases"/>
    <property type="match status" value="1"/>
</dbReference>
<dbReference type="PROSITE" id="PS51420">
    <property type="entry name" value="RHO"/>
    <property type="match status" value="1"/>
</dbReference>
<accession>Q9P8V0</accession>
<feature type="chain" id="PRO_0000198934" description="GTP-binding protein RHO4">
    <location>
        <begin position="1"/>
        <end position="256"/>
    </location>
</feature>
<feature type="propeptide" id="PRO_0000281264" description="Removed in mature form" evidence="1">
    <location>
        <begin position="257"/>
        <end position="259"/>
    </location>
</feature>
<feature type="short sequence motif" description="Effector region" evidence="1">
    <location>
        <begin position="81"/>
        <end position="89"/>
    </location>
</feature>
<feature type="binding site" evidence="1">
    <location>
        <begin position="59"/>
        <end position="66"/>
    </location>
    <ligand>
        <name>GTP</name>
        <dbReference type="ChEBI" id="CHEBI:37565"/>
    </ligand>
</feature>
<feature type="binding site" evidence="1">
    <location>
        <begin position="107"/>
        <end position="111"/>
    </location>
    <ligand>
        <name>GTP</name>
        <dbReference type="ChEBI" id="CHEBI:37565"/>
    </ligand>
</feature>
<feature type="binding site" evidence="1">
    <location>
        <begin position="165"/>
        <end position="168"/>
    </location>
    <ligand>
        <name>GTP</name>
        <dbReference type="ChEBI" id="CHEBI:37565"/>
    </ligand>
</feature>
<feature type="modified residue" description="Cysteine methyl ester" evidence="1">
    <location>
        <position position="256"/>
    </location>
</feature>
<feature type="lipid moiety-binding region" description="S-geranylgeranyl cysteine" evidence="1">
    <location>
        <position position="256"/>
    </location>
</feature>
<organism>
    <name type="scientific">Eremothecium gossypii (strain ATCC 10895 / CBS 109.51 / FGSC 9923 / NRRL Y-1056)</name>
    <name type="common">Yeast</name>
    <name type="synonym">Ashbya gossypii</name>
    <dbReference type="NCBI Taxonomy" id="284811"/>
    <lineage>
        <taxon>Eukaryota</taxon>
        <taxon>Fungi</taxon>
        <taxon>Dikarya</taxon>
        <taxon>Ascomycota</taxon>
        <taxon>Saccharomycotina</taxon>
        <taxon>Saccharomycetes</taxon>
        <taxon>Saccharomycetales</taxon>
        <taxon>Saccharomycetaceae</taxon>
        <taxon>Eremothecium</taxon>
    </lineage>
</organism>
<gene>
    <name type="primary">RHO4</name>
    <name type="ordered locus">ACR257C</name>
</gene>
<keyword id="KW-1003">Cell membrane</keyword>
<keyword id="KW-0342">GTP-binding</keyword>
<keyword id="KW-0449">Lipoprotein</keyword>
<keyword id="KW-0472">Membrane</keyword>
<keyword id="KW-0488">Methylation</keyword>
<keyword id="KW-0547">Nucleotide-binding</keyword>
<keyword id="KW-0636">Prenylation</keyword>
<keyword id="KW-1185">Reference proteome</keyword>
<comment type="subcellular location">
    <subcellularLocation>
        <location evidence="2">Cell membrane</location>
        <topology evidence="2">Lipid-anchor</topology>
        <orientation evidence="2">Cytoplasmic side</orientation>
    </subcellularLocation>
</comment>
<comment type="similarity">
    <text evidence="2">Belongs to the small GTPase superfamily. Rho family.</text>
</comment>